<evidence type="ECO:0000250" key="1">
    <source>
        <dbReference type="UniProtKB" id="Q9H8T0"/>
    </source>
</evidence>
<evidence type="ECO:0000255" key="2">
    <source>
        <dbReference type="PROSITE-ProRule" id="PRU00388"/>
    </source>
</evidence>
<evidence type="ECO:0000256" key="3">
    <source>
        <dbReference type="SAM" id="MobiDB-lite"/>
    </source>
</evidence>
<evidence type="ECO:0000305" key="4"/>
<sequence>MNPLWSMSSGSVRKRAEGEEKTLAGDVKTSPPRSAPKKQLPSIPKNALPISKPTSPAPAAQSTNGTHASYGPFYLEYSLLAEFTMVVKQKLPGVYVQPSYRSALVWFGVIFIRHGLYQDGVFKFTVYIPDNYPDGDCPRLLFDIPVFHPLVDPTSGELDVKRAFAKWRRNHNHIWQVLMYARRVFYKIDTTSPLNPEAAVLYEKDIQLFKSKVVDSVKVCTARLFDQPKIEDPYAISFSPWNPSVHDEAREKMLTQKKPDEQHNKSVHVAGLSWVKPGSVQPFSKEEKTVAT</sequence>
<keyword id="KW-0053">Apoptosis</keyword>
<keyword id="KW-1003">Cell membrane</keyword>
<keyword id="KW-0963">Cytoplasm</keyword>
<keyword id="KW-0472">Membrane</keyword>
<keyword id="KW-0597">Phosphoprotein</keyword>
<keyword id="KW-0653">Protein transport</keyword>
<keyword id="KW-1185">Reference proteome</keyword>
<keyword id="KW-0813">Transport</keyword>
<protein>
    <recommendedName>
        <fullName>AKT-interacting protein</fullName>
    </recommendedName>
    <alternativeName>
        <fullName>Fused toes protein homolog</fullName>
    </alternativeName>
</protein>
<dbReference type="EMBL" id="BC089985">
    <property type="protein sequence ID" value="AAH89985.1"/>
    <property type="molecule type" value="mRNA"/>
</dbReference>
<dbReference type="RefSeq" id="NP_001011926.1">
    <property type="nucleotide sequence ID" value="NM_001011926.1"/>
</dbReference>
<dbReference type="RefSeq" id="XP_063133934.1">
    <property type="nucleotide sequence ID" value="XM_063277864.1"/>
</dbReference>
<dbReference type="SMR" id="Q5FVH4"/>
<dbReference type="FunCoup" id="Q5FVH4">
    <property type="interactions" value="2104"/>
</dbReference>
<dbReference type="STRING" id="10116.ENSRNOP00000057588"/>
<dbReference type="PhosphoSitePlus" id="Q5FVH4"/>
<dbReference type="PaxDb" id="10116-ENSRNOP00000057588"/>
<dbReference type="GeneID" id="291906"/>
<dbReference type="KEGG" id="rno:291906"/>
<dbReference type="AGR" id="RGD:1311170"/>
<dbReference type="CTD" id="64400"/>
<dbReference type="RGD" id="1311170">
    <property type="gene designation" value="Aktip"/>
</dbReference>
<dbReference type="VEuPathDB" id="HostDB:ENSRNOG00000011956"/>
<dbReference type="eggNOG" id="KOG0429">
    <property type="taxonomic scope" value="Eukaryota"/>
</dbReference>
<dbReference type="HOGENOM" id="CLU_083049_0_0_1"/>
<dbReference type="InParanoid" id="Q5FVH4"/>
<dbReference type="OrthoDB" id="5596422at2759"/>
<dbReference type="PhylomeDB" id="Q5FVH4"/>
<dbReference type="TreeFam" id="TF314386"/>
<dbReference type="PRO" id="PR:Q5FVH4"/>
<dbReference type="Proteomes" id="UP000002494">
    <property type="component" value="Chromosome 19"/>
</dbReference>
<dbReference type="Bgee" id="ENSRNOG00000011956">
    <property type="expression patterns" value="Expressed in duodenum and 20 other cell types or tissues"/>
</dbReference>
<dbReference type="GO" id="GO:0070695">
    <property type="term" value="C:FHF complex"/>
    <property type="evidence" value="ECO:0000250"/>
    <property type="project" value="UniProtKB"/>
</dbReference>
<dbReference type="GO" id="GO:0030897">
    <property type="term" value="C:HOPS complex"/>
    <property type="evidence" value="ECO:0000266"/>
    <property type="project" value="RGD"/>
</dbReference>
<dbReference type="GO" id="GO:0005634">
    <property type="term" value="C:nucleus"/>
    <property type="evidence" value="ECO:0000318"/>
    <property type="project" value="GO_Central"/>
</dbReference>
<dbReference type="GO" id="GO:0005886">
    <property type="term" value="C:plasma membrane"/>
    <property type="evidence" value="ECO:0000266"/>
    <property type="project" value="RGD"/>
</dbReference>
<dbReference type="GO" id="GO:0061631">
    <property type="term" value="F:ubiquitin conjugating enzyme activity"/>
    <property type="evidence" value="ECO:0000318"/>
    <property type="project" value="GO_Central"/>
</dbReference>
<dbReference type="GO" id="GO:0006915">
    <property type="term" value="P:apoptotic process"/>
    <property type="evidence" value="ECO:0007669"/>
    <property type="project" value="UniProtKB-KW"/>
</dbReference>
<dbReference type="GO" id="GO:0045022">
    <property type="term" value="P:early endosome to late endosome transport"/>
    <property type="evidence" value="ECO:0000250"/>
    <property type="project" value="UniProtKB"/>
</dbReference>
<dbReference type="GO" id="GO:0007032">
    <property type="term" value="P:endosome organization"/>
    <property type="evidence" value="ECO:0000250"/>
    <property type="project" value="UniProtKB"/>
</dbReference>
<dbReference type="GO" id="GO:0008333">
    <property type="term" value="P:endosome to lysosome transport"/>
    <property type="evidence" value="ECO:0000250"/>
    <property type="project" value="UniProtKB"/>
</dbReference>
<dbReference type="GO" id="GO:0007040">
    <property type="term" value="P:lysosome organization"/>
    <property type="evidence" value="ECO:0000250"/>
    <property type="project" value="UniProtKB"/>
</dbReference>
<dbReference type="GO" id="GO:0006301">
    <property type="term" value="P:postreplication repair"/>
    <property type="evidence" value="ECO:0000318"/>
    <property type="project" value="GO_Central"/>
</dbReference>
<dbReference type="GO" id="GO:0070534">
    <property type="term" value="P:protein K63-linked ubiquitination"/>
    <property type="evidence" value="ECO:0000318"/>
    <property type="project" value="GO_Central"/>
</dbReference>
<dbReference type="GO" id="GO:1905719">
    <property type="term" value="P:protein localization to perinuclear region of cytoplasm"/>
    <property type="evidence" value="ECO:0000250"/>
    <property type="project" value="UniProtKB"/>
</dbReference>
<dbReference type="GO" id="GO:0015031">
    <property type="term" value="P:protein transport"/>
    <property type="evidence" value="ECO:0007669"/>
    <property type="project" value="UniProtKB-KW"/>
</dbReference>
<dbReference type="CDD" id="cd23814">
    <property type="entry name" value="UEV_AKTIP"/>
    <property type="match status" value="1"/>
</dbReference>
<dbReference type="FunFam" id="3.10.110.10:FF:000030">
    <property type="entry name" value="AKT-interacting protein-like isoform X2"/>
    <property type="match status" value="1"/>
</dbReference>
<dbReference type="Gene3D" id="3.10.110.10">
    <property type="entry name" value="Ubiquitin Conjugating Enzyme"/>
    <property type="match status" value="1"/>
</dbReference>
<dbReference type="InterPro" id="IPR050113">
    <property type="entry name" value="Ub_conjugating_enzyme"/>
</dbReference>
<dbReference type="InterPro" id="IPR000608">
    <property type="entry name" value="UBQ-conjugat_E2_core"/>
</dbReference>
<dbReference type="InterPro" id="IPR016135">
    <property type="entry name" value="UBQ-conjugating_enzyme/RWD"/>
</dbReference>
<dbReference type="PANTHER" id="PTHR24067">
    <property type="entry name" value="UBIQUITIN-CONJUGATING ENZYME E2"/>
    <property type="match status" value="1"/>
</dbReference>
<dbReference type="Pfam" id="PF00179">
    <property type="entry name" value="UQ_con"/>
    <property type="match status" value="1"/>
</dbReference>
<dbReference type="SMART" id="SM00212">
    <property type="entry name" value="UBCc"/>
    <property type="match status" value="1"/>
</dbReference>
<dbReference type="SUPFAM" id="SSF54495">
    <property type="entry name" value="UBC-like"/>
    <property type="match status" value="1"/>
</dbReference>
<dbReference type="PROSITE" id="PS50127">
    <property type="entry name" value="UBC_2"/>
    <property type="match status" value="1"/>
</dbReference>
<name>AKTIP_RAT</name>
<accession>Q5FVH4</accession>
<organism>
    <name type="scientific">Rattus norvegicus</name>
    <name type="common">Rat</name>
    <dbReference type="NCBI Taxonomy" id="10116"/>
    <lineage>
        <taxon>Eukaryota</taxon>
        <taxon>Metazoa</taxon>
        <taxon>Chordata</taxon>
        <taxon>Craniata</taxon>
        <taxon>Vertebrata</taxon>
        <taxon>Euteleostomi</taxon>
        <taxon>Mammalia</taxon>
        <taxon>Eutheria</taxon>
        <taxon>Euarchontoglires</taxon>
        <taxon>Glires</taxon>
        <taxon>Rodentia</taxon>
        <taxon>Myomorpha</taxon>
        <taxon>Muroidea</taxon>
        <taxon>Muridae</taxon>
        <taxon>Murinae</taxon>
        <taxon>Rattus</taxon>
    </lineage>
</organism>
<comment type="function">
    <text evidence="1">Component of the FTS/Hook/FHIP complex (FHF complex). The FHF complex may function to promote vesicle trafficking and/or fusion via the homotypic vesicular protein sorting complex (the HOPS complex). Regulates apoptosis by enhancing phosphorylation and activation of AKT1. Increases release of TNFSF6 via the AKT1/GSK3B/NFATC1 signaling cascade. FHF complex promotes the distribution of AP-4 complex to the perinuclear area of the cell.</text>
</comment>
<comment type="subunit">
    <text evidence="1">Component of the FTS/Hook/FHIP complex (FHF complex), composed of AKTIP/FTS, FHIP1B, and one or more members of the Hook family of proteins HOOK1, HOOK2, and HOOK3. Interacts directly with HOOK1, HOOK2 and HOOK3. The FHF complex associates with the homotypic vesicular sorting complex (the HOPS complex). Also interacts with AKT1. May interact with FHIP1A.</text>
</comment>
<comment type="subcellular location">
    <subcellularLocation>
        <location evidence="1">Cytoplasm</location>
    </subcellularLocation>
    <subcellularLocation>
        <location evidence="1">Cell membrane</location>
        <topology evidence="1">Peripheral membrane protein</topology>
    </subcellularLocation>
</comment>
<comment type="similarity">
    <text evidence="2">Belongs to the ubiquitin-conjugating enzyme family. FTS subfamily.</text>
</comment>
<comment type="caution">
    <text evidence="4">Lacks the conserved Cys residue necessary for ubiquitin-conjugating enzyme E2 activity.</text>
</comment>
<reference key="1">
    <citation type="journal article" date="2004" name="Genome Res.">
        <title>The status, quality, and expansion of the NIH full-length cDNA project: the Mammalian Gene Collection (MGC).</title>
        <authorList>
            <consortium name="The MGC Project Team"/>
        </authorList>
    </citation>
    <scope>NUCLEOTIDE SEQUENCE [LARGE SCALE MRNA]</scope>
    <source>
        <tissue>Brain</tissue>
    </source>
</reference>
<reference key="2">
    <citation type="journal article" date="2012" name="Nat. Commun.">
        <title>Quantitative maps of protein phosphorylation sites across 14 different rat organs and tissues.</title>
        <authorList>
            <person name="Lundby A."/>
            <person name="Secher A."/>
            <person name="Lage K."/>
            <person name="Nordsborg N.B."/>
            <person name="Dmytriyev A."/>
            <person name="Lundby C."/>
            <person name="Olsen J.V."/>
        </authorList>
    </citation>
    <scope>IDENTIFICATION BY MASS SPECTROMETRY [LARGE SCALE ANALYSIS]</scope>
</reference>
<feature type="chain" id="PRO_0000379018" description="AKT-interacting protein">
    <location>
        <begin position="1"/>
        <end position="292"/>
    </location>
</feature>
<feature type="domain" description="UBC core" evidence="2">
    <location>
        <begin position="74"/>
        <end position="222"/>
    </location>
</feature>
<feature type="region of interest" description="Disordered" evidence="3">
    <location>
        <begin position="1"/>
        <end position="64"/>
    </location>
</feature>
<feature type="compositionally biased region" description="Polar residues" evidence="3">
    <location>
        <begin position="1"/>
        <end position="11"/>
    </location>
</feature>
<feature type="compositionally biased region" description="Basic and acidic residues" evidence="3">
    <location>
        <begin position="14"/>
        <end position="23"/>
    </location>
</feature>
<feature type="modified residue" description="Phosphoserine" evidence="1">
    <location>
        <position position="30"/>
    </location>
</feature>
<gene>
    <name type="primary">Aktip</name>
    <name type="synonym">Fts</name>
</gene>
<proteinExistence type="evidence at protein level"/>